<accession>P39788</accession>
<keyword id="KW-0004">4Fe-4S</keyword>
<keyword id="KW-0227">DNA damage</keyword>
<keyword id="KW-0234">DNA repair</keyword>
<keyword id="KW-0238">DNA-binding</keyword>
<keyword id="KW-0326">Glycosidase</keyword>
<keyword id="KW-0378">Hydrolase</keyword>
<keyword id="KW-0408">Iron</keyword>
<keyword id="KW-0411">Iron-sulfur</keyword>
<keyword id="KW-0456">Lyase</keyword>
<keyword id="KW-0479">Metal-binding</keyword>
<keyword id="KW-1185">Reference proteome</keyword>
<organism>
    <name type="scientific">Bacillus subtilis (strain 168)</name>
    <dbReference type="NCBI Taxonomy" id="224308"/>
    <lineage>
        <taxon>Bacteria</taxon>
        <taxon>Bacillati</taxon>
        <taxon>Bacillota</taxon>
        <taxon>Bacilli</taxon>
        <taxon>Bacillales</taxon>
        <taxon>Bacillaceae</taxon>
        <taxon>Bacillus</taxon>
    </lineage>
</organism>
<protein>
    <recommendedName>
        <fullName evidence="1">Endonuclease III</fullName>
        <ecNumber evidence="1">4.2.99.18</ecNumber>
    </recommendedName>
    <alternativeName>
        <fullName evidence="1">DNA-(apurinic or apyrimidinic site) lyase</fullName>
    </alternativeName>
</protein>
<reference key="1">
    <citation type="journal article" date="1995" name="Microbiology">
        <title>Nucleotide sequence of the Bacillus subtilis dnaD gene.</title>
        <authorList>
            <person name="Bruand C."/>
            <person name="Sorokin A."/>
            <person name="Serror P."/>
            <person name="Ehrlich S.D."/>
        </authorList>
    </citation>
    <scope>NUCLEOTIDE SEQUENCE [GENOMIC DNA]</scope>
    <source>
        <strain>168</strain>
    </source>
</reference>
<reference key="2">
    <citation type="journal article" date="1996" name="Microbiology">
        <title>Sequence analysis of the Bacillus subtilis chromosome region between the serA and kdg loci cloned in a yeast artificial chromosome.</title>
        <authorList>
            <person name="Sorokin A.V."/>
            <person name="Azevedo V."/>
            <person name="Zumstein E."/>
            <person name="Galleron N."/>
            <person name="Ehrlich S.D."/>
            <person name="Serror P."/>
        </authorList>
    </citation>
    <scope>NUCLEOTIDE SEQUENCE [GENOMIC DNA]</scope>
    <source>
        <strain>168 / Marburg / ATCC 6051 / DSM 10 / JCM 1465 / NBRC 13719 / NCIMB 3610 / NRRL NRS-744 / VKM B-501</strain>
    </source>
</reference>
<reference key="3">
    <citation type="journal article" date="1997" name="Nature">
        <title>The complete genome sequence of the Gram-positive bacterium Bacillus subtilis.</title>
        <authorList>
            <person name="Kunst F."/>
            <person name="Ogasawara N."/>
            <person name="Moszer I."/>
            <person name="Albertini A.M."/>
            <person name="Alloni G."/>
            <person name="Azevedo V."/>
            <person name="Bertero M.G."/>
            <person name="Bessieres P."/>
            <person name="Bolotin A."/>
            <person name="Borchert S."/>
            <person name="Borriss R."/>
            <person name="Boursier L."/>
            <person name="Brans A."/>
            <person name="Braun M."/>
            <person name="Brignell S.C."/>
            <person name="Bron S."/>
            <person name="Brouillet S."/>
            <person name="Bruschi C.V."/>
            <person name="Caldwell B."/>
            <person name="Capuano V."/>
            <person name="Carter N.M."/>
            <person name="Choi S.-K."/>
            <person name="Codani J.-J."/>
            <person name="Connerton I.F."/>
            <person name="Cummings N.J."/>
            <person name="Daniel R.A."/>
            <person name="Denizot F."/>
            <person name="Devine K.M."/>
            <person name="Duesterhoeft A."/>
            <person name="Ehrlich S.D."/>
            <person name="Emmerson P.T."/>
            <person name="Entian K.-D."/>
            <person name="Errington J."/>
            <person name="Fabret C."/>
            <person name="Ferrari E."/>
            <person name="Foulger D."/>
            <person name="Fritz C."/>
            <person name="Fujita M."/>
            <person name="Fujita Y."/>
            <person name="Fuma S."/>
            <person name="Galizzi A."/>
            <person name="Galleron N."/>
            <person name="Ghim S.-Y."/>
            <person name="Glaser P."/>
            <person name="Goffeau A."/>
            <person name="Golightly E.J."/>
            <person name="Grandi G."/>
            <person name="Guiseppi G."/>
            <person name="Guy B.J."/>
            <person name="Haga K."/>
            <person name="Haiech J."/>
            <person name="Harwood C.R."/>
            <person name="Henaut A."/>
            <person name="Hilbert H."/>
            <person name="Holsappel S."/>
            <person name="Hosono S."/>
            <person name="Hullo M.-F."/>
            <person name="Itaya M."/>
            <person name="Jones L.-M."/>
            <person name="Joris B."/>
            <person name="Karamata D."/>
            <person name="Kasahara Y."/>
            <person name="Klaerr-Blanchard M."/>
            <person name="Klein C."/>
            <person name="Kobayashi Y."/>
            <person name="Koetter P."/>
            <person name="Koningstein G."/>
            <person name="Krogh S."/>
            <person name="Kumano M."/>
            <person name="Kurita K."/>
            <person name="Lapidus A."/>
            <person name="Lardinois S."/>
            <person name="Lauber J."/>
            <person name="Lazarevic V."/>
            <person name="Lee S.-M."/>
            <person name="Levine A."/>
            <person name="Liu H."/>
            <person name="Masuda S."/>
            <person name="Mauel C."/>
            <person name="Medigue C."/>
            <person name="Medina N."/>
            <person name="Mellado R.P."/>
            <person name="Mizuno M."/>
            <person name="Moestl D."/>
            <person name="Nakai S."/>
            <person name="Noback M."/>
            <person name="Noone D."/>
            <person name="O'Reilly M."/>
            <person name="Ogawa K."/>
            <person name="Ogiwara A."/>
            <person name="Oudega B."/>
            <person name="Park S.-H."/>
            <person name="Parro V."/>
            <person name="Pohl T.M."/>
            <person name="Portetelle D."/>
            <person name="Porwollik S."/>
            <person name="Prescott A.M."/>
            <person name="Presecan E."/>
            <person name="Pujic P."/>
            <person name="Purnelle B."/>
            <person name="Rapoport G."/>
            <person name="Rey M."/>
            <person name="Reynolds S."/>
            <person name="Rieger M."/>
            <person name="Rivolta C."/>
            <person name="Rocha E."/>
            <person name="Roche B."/>
            <person name="Rose M."/>
            <person name="Sadaie Y."/>
            <person name="Sato T."/>
            <person name="Scanlan E."/>
            <person name="Schleich S."/>
            <person name="Schroeter R."/>
            <person name="Scoffone F."/>
            <person name="Sekiguchi J."/>
            <person name="Sekowska A."/>
            <person name="Seror S.J."/>
            <person name="Serror P."/>
            <person name="Shin B.-S."/>
            <person name="Soldo B."/>
            <person name="Sorokin A."/>
            <person name="Tacconi E."/>
            <person name="Takagi T."/>
            <person name="Takahashi H."/>
            <person name="Takemaru K."/>
            <person name="Takeuchi M."/>
            <person name="Tamakoshi A."/>
            <person name="Tanaka T."/>
            <person name="Terpstra P."/>
            <person name="Tognoni A."/>
            <person name="Tosato V."/>
            <person name="Uchiyama S."/>
            <person name="Vandenbol M."/>
            <person name="Vannier F."/>
            <person name="Vassarotti A."/>
            <person name="Viari A."/>
            <person name="Wambutt R."/>
            <person name="Wedler E."/>
            <person name="Wedler H."/>
            <person name="Weitzenegger T."/>
            <person name="Winters P."/>
            <person name="Wipat A."/>
            <person name="Yamamoto H."/>
            <person name="Yamane K."/>
            <person name="Yasumoto K."/>
            <person name="Yata K."/>
            <person name="Yoshida K."/>
            <person name="Yoshikawa H.-F."/>
            <person name="Zumstein E."/>
            <person name="Yoshikawa H."/>
            <person name="Danchin A."/>
        </authorList>
    </citation>
    <scope>NUCLEOTIDE SEQUENCE [LARGE SCALE GENOMIC DNA]</scope>
    <source>
        <strain>168</strain>
    </source>
</reference>
<reference key="4">
    <citation type="journal article" date="2000" name="J. Gen. Appl. Microbiol.">
        <title>Genetic analysis of Bacillus subtilis mutator genes.</title>
        <authorList>
            <person name="Sasaki M."/>
            <person name="Yonemura Y."/>
            <person name="Kurusu Y."/>
        </authorList>
    </citation>
    <scope>DISRUPTION PHENOTYPE</scope>
    <source>
        <strain>168</strain>
    </source>
</reference>
<sequence>MLNLKQIEFCLDKIGDMFPHAECELVHSNPFELVVAVALSAQCTDALVNRVTKTLFQKYKRPEDYLAVPLEELQQDIKSIGLYRNKAKNIQKLSKMIIEDYGGEVPRDRDELVKLPGVGRKTANVVVSVAFGVPAIAVDTHVERVSKRLGICRWKDSVLEVEKTLMRKVPKEDWSVTHHRLIFFGRYHCKAQSPRCAECPLLSLCREGQKRDKKGLVKR</sequence>
<proteinExistence type="inferred from homology"/>
<feature type="chain" id="PRO_0000102213" description="Endonuclease III">
    <location>
        <begin position="1"/>
        <end position="219"/>
    </location>
</feature>
<feature type="domain" description="HhH" evidence="1">
    <location>
        <begin position="109"/>
        <end position="128"/>
    </location>
</feature>
<feature type="binding site" evidence="1">
    <location>
        <position position="189"/>
    </location>
    <ligand>
        <name>[4Fe-4S] cluster</name>
        <dbReference type="ChEBI" id="CHEBI:49883"/>
    </ligand>
</feature>
<feature type="binding site" evidence="1">
    <location>
        <position position="196"/>
    </location>
    <ligand>
        <name>[4Fe-4S] cluster</name>
        <dbReference type="ChEBI" id="CHEBI:49883"/>
    </ligand>
</feature>
<feature type="binding site" evidence="1">
    <location>
        <position position="199"/>
    </location>
    <ligand>
        <name>[4Fe-4S] cluster</name>
        <dbReference type="ChEBI" id="CHEBI:49883"/>
    </ligand>
</feature>
<feature type="binding site" evidence="1">
    <location>
        <position position="205"/>
    </location>
    <ligand>
        <name>[4Fe-4S] cluster</name>
        <dbReference type="ChEBI" id="CHEBI:49883"/>
    </ligand>
</feature>
<name>END3_BACSU</name>
<evidence type="ECO:0000255" key="1">
    <source>
        <dbReference type="HAMAP-Rule" id="MF_00942"/>
    </source>
</evidence>
<evidence type="ECO:0000269" key="2">
    <source>
    </source>
</evidence>
<comment type="function">
    <text evidence="1">DNA repair enzyme that has both DNA N-glycosylase activity and AP-lyase activity. The DNA N-glycosylase activity releases various damaged pyrimidines from DNA by cleaving the N-glycosidic bond, leaving an AP (apurinic/apyrimidinic) site. The AP-lyase activity cleaves the phosphodiester bond 3' to the AP site by a beta-elimination, leaving a 3'-terminal unsaturated sugar and a product with a terminal 5'-phosphate.</text>
</comment>
<comment type="catalytic activity">
    <reaction evidence="1">
        <text>2'-deoxyribonucleotide-(2'-deoxyribose 5'-phosphate)-2'-deoxyribonucleotide-DNA = a 3'-end 2'-deoxyribonucleotide-(2,3-dehydro-2,3-deoxyribose 5'-phosphate)-DNA + a 5'-end 5'-phospho-2'-deoxyribonucleoside-DNA + H(+)</text>
        <dbReference type="Rhea" id="RHEA:66592"/>
        <dbReference type="Rhea" id="RHEA-COMP:13180"/>
        <dbReference type="Rhea" id="RHEA-COMP:16897"/>
        <dbReference type="Rhea" id="RHEA-COMP:17067"/>
        <dbReference type="ChEBI" id="CHEBI:15378"/>
        <dbReference type="ChEBI" id="CHEBI:136412"/>
        <dbReference type="ChEBI" id="CHEBI:157695"/>
        <dbReference type="ChEBI" id="CHEBI:167181"/>
        <dbReference type="EC" id="4.2.99.18"/>
    </reaction>
</comment>
<comment type="cofactor">
    <cofactor evidence="1">
        <name>[4Fe-4S] cluster</name>
        <dbReference type="ChEBI" id="CHEBI:49883"/>
    </cofactor>
    <text evidence="1">Binds 1 [4Fe-4S] cluster.</text>
</comment>
<comment type="disruption phenotype">
    <text evidence="2">Cells lacking this gene have a 5-fold increased spontaneous mutation frequency. A triple MutS/MutL/nth disruption has a 280-fold increased spontaneous mutation frequency.</text>
</comment>
<comment type="similarity">
    <text evidence="1">Belongs to the Nth/MutY family.</text>
</comment>
<gene>
    <name evidence="1" type="primary">nth</name>
    <name type="synonym">jooB</name>
    <name type="synonym">ypoB</name>
    <name type="ordered locus">BSU22340</name>
</gene>
<dbReference type="EC" id="4.2.99.18" evidence="1"/>
<dbReference type="EMBL" id="U11289">
    <property type="protein sequence ID" value="AAA80005.1"/>
    <property type="molecule type" value="Genomic_DNA"/>
</dbReference>
<dbReference type="EMBL" id="L47709">
    <property type="protein sequence ID" value="AAB38457.1"/>
    <property type="molecule type" value="Genomic_DNA"/>
</dbReference>
<dbReference type="EMBL" id="AL009126">
    <property type="protein sequence ID" value="CAB14150.1"/>
    <property type="molecule type" value="Genomic_DNA"/>
</dbReference>
<dbReference type="PIR" id="I40525">
    <property type="entry name" value="I40525"/>
</dbReference>
<dbReference type="RefSeq" id="NP_390115.1">
    <property type="nucleotide sequence ID" value="NC_000964.3"/>
</dbReference>
<dbReference type="RefSeq" id="WP_009967580.1">
    <property type="nucleotide sequence ID" value="NZ_OZ025638.1"/>
</dbReference>
<dbReference type="SMR" id="P39788"/>
<dbReference type="FunCoup" id="P39788">
    <property type="interactions" value="546"/>
</dbReference>
<dbReference type="STRING" id="224308.BSU22340"/>
<dbReference type="PaxDb" id="224308-BSU22340"/>
<dbReference type="EnsemblBacteria" id="CAB14150">
    <property type="protein sequence ID" value="CAB14150"/>
    <property type="gene ID" value="BSU_22340"/>
</dbReference>
<dbReference type="GeneID" id="939036"/>
<dbReference type="KEGG" id="bsu:BSU22340"/>
<dbReference type="PATRIC" id="fig|224308.179.peg.2438"/>
<dbReference type="eggNOG" id="COG0177">
    <property type="taxonomic scope" value="Bacteria"/>
</dbReference>
<dbReference type="InParanoid" id="P39788"/>
<dbReference type="OrthoDB" id="9800977at2"/>
<dbReference type="PhylomeDB" id="P39788"/>
<dbReference type="BioCyc" id="BSUB:BSU22340-MONOMER"/>
<dbReference type="Proteomes" id="UP000001570">
    <property type="component" value="Chromosome"/>
</dbReference>
<dbReference type="GO" id="GO:0051539">
    <property type="term" value="F:4 iron, 4 sulfur cluster binding"/>
    <property type="evidence" value="ECO:0007669"/>
    <property type="project" value="UniProtKB-UniRule"/>
</dbReference>
<dbReference type="GO" id="GO:0140078">
    <property type="term" value="F:class I DNA-(apurinic or apyrimidinic site) endonuclease activity"/>
    <property type="evidence" value="ECO:0007669"/>
    <property type="project" value="UniProtKB-EC"/>
</dbReference>
<dbReference type="GO" id="GO:0003677">
    <property type="term" value="F:DNA binding"/>
    <property type="evidence" value="ECO:0007669"/>
    <property type="project" value="UniProtKB-UniRule"/>
</dbReference>
<dbReference type="GO" id="GO:0019104">
    <property type="term" value="F:DNA N-glycosylase activity"/>
    <property type="evidence" value="ECO:0000318"/>
    <property type="project" value="GO_Central"/>
</dbReference>
<dbReference type="GO" id="GO:0046872">
    <property type="term" value="F:metal ion binding"/>
    <property type="evidence" value="ECO:0007669"/>
    <property type="project" value="UniProtKB-KW"/>
</dbReference>
<dbReference type="GO" id="GO:0006285">
    <property type="term" value="P:base-excision repair, AP site formation"/>
    <property type="evidence" value="ECO:0000318"/>
    <property type="project" value="GO_Central"/>
</dbReference>
<dbReference type="CDD" id="cd00056">
    <property type="entry name" value="ENDO3c"/>
    <property type="match status" value="1"/>
</dbReference>
<dbReference type="FunFam" id="1.10.1670.10:FF:000001">
    <property type="entry name" value="Endonuclease III"/>
    <property type="match status" value="1"/>
</dbReference>
<dbReference type="FunFam" id="1.10.340.30:FF:000001">
    <property type="entry name" value="Endonuclease III"/>
    <property type="match status" value="1"/>
</dbReference>
<dbReference type="Gene3D" id="1.10.1670.10">
    <property type="entry name" value="Helix-hairpin-Helix base-excision DNA repair enzymes (C-terminal)"/>
    <property type="match status" value="1"/>
</dbReference>
<dbReference type="Gene3D" id="1.10.340.30">
    <property type="entry name" value="Hypothetical protein, domain 2"/>
    <property type="match status" value="1"/>
</dbReference>
<dbReference type="HAMAP" id="MF_00942">
    <property type="entry name" value="Nth"/>
    <property type="match status" value="1"/>
</dbReference>
<dbReference type="InterPro" id="IPR011257">
    <property type="entry name" value="DNA_glycosylase"/>
</dbReference>
<dbReference type="InterPro" id="IPR004036">
    <property type="entry name" value="Endonuclease-III-like_CS2"/>
</dbReference>
<dbReference type="InterPro" id="IPR003651">
    <property type="entry name" value="Endonuclease3_FeS-loop_motif"/>
</dbReference>
<dbReference type="InterPro" id="IPR004035">
    <property type="entry name" value="Endouclease-III_FeS-bd_BS"/>
</dbReference>
<dbReference type="InterPro" id="IPR003265">
    <property type="entry name" value="HhH-GPD_domain"/>
</dbReference>
<dbReference type="InterPro" id="IPR023170">
    <property type="entry name" value="HhH_base_excis_C"/>
</dbReference>
<dbReference type="InterPro" id="IPR000445">
    <property type="entry name" value="HhH_motif"/>
</dbReference>
<dbReference type="InterPro" id="IPR005759">
    <property type="entry name" value="Nth"/>
</dbReference>
<dbReference type="NCBIfam" id="TIGR01083">
    <property type="entry name" value="nth"/>
    <property type="match status" value="1"/>
</dbReference>
<dbReference type="PANTHER" id="PTHR10359">
    <property type="entry name" value="A/G-SPECIFIC ADENINE GLYCOSYLASE/ENDONUCLEASE III"/>
    <property type="match status" value="1"/>
</dbReference>
<dbReference type="PANTHER" id="PTHR10359:SF18">
    <property type="entry name" value="ENDONUCLEASE III"/>
    <property type="match status" value="1"/>
</dbReference>
<dbReference type="Pfam" id="PF10576">
    <property type="entry name" value="EndIII_4Fe-2S"/>
    <property type="match status" value="1"/>
</dbReference>
<dbReference type="Pfam" id="PF00633">
    <property type="entry name" value="HHH"/>
    <property type="match status" value="1"/>
</dbReference>
<dbReference type="Pfam" id="PF00730">
    <property type="entry name" value="HhH-GPD"/>
    <property type="match status" value="1"/>
</dbReference>
<dbReference type="PIRSF" id="PIRSF001435">
    <property type="entry name" value="Nth"/>
    <property type="match status" value="1"/>
</dbReference>
<dbReference type="SMART" id="SM00478">
    <property type="entry name" value="ENDO3c"/>
    <property type="match status" value="1"/>
</dbReference>
<dbReference type="SMART" id="SM00525">
    <property type="entry name" value="FES"/>
    <property type="match status" value="1"/>
</dbReference>
<dbReference type="SUPFAM" id="SSF48150">
    <property type="entry name" value="DNA-glycosylase"/>
    <property type="match status" value="1"/>
</dbReference>
<dbReference type="PROSITE" id="PS00764">
    <property type="entry name" value="ENDONUCLEASE_III_1"/>
    <property type="match status" value="1"/>
</dbReference>
<dbReference type="PROSITE" id="PS01155">
    <property type="entry name" value="ENDONUCLEASE_III_2"/>
    <property type="match status" value="1"/>
</dbReference>